<accession>A1EGX6</accession>
<proteinExistence type="evidence at protein level"/>
<reference evidence="5 6" key="1">
    <citation type="journal article" date="2007" name="J. Biol. Chem.">
        <title>FSCB, a novel protein kinase A-phosphorylated calcium-binding protein, is a CABYR-binding partner involved in late steps of fibrous sheath biogenesis.</title>
        <authorList>
            <person name="Li Y.-F."/>
            <person name="He W."/>
            <person name="Jha K.N."/>
            <person name="Klotz K."/>
            <person name="Kim Y.-H."/>
            <person name="Mandal A."/>
            <person name="Pulido S."/>
            <person name="Digilio L."/>
            <person name="Flickinger C.J."/>
            <person name="Herr J.C."/>
        </authorList>
    </citation>
    <scope>NUCLEOTIDE SEQUENCE [MRNA]</scope>
    <scope>PROTEIN SEQUENCE OF 1056-1063</scope>
    <scope>FUNCTION</scope>
    <scope>INTERACTION WITH CABYR</scope>
    <scope>CALCIUM-BINDING</scope>
    <scope>SUBCELLULAR LOCATION</scope>
    <scope>TISSUE SPECIFICITY</scope>
    <scope>DEVELOPMENTAL STAGE</scope>
    <scope>PHOSPHORYLATION AT SER-25; SER-57; SER-186; SER-275; SER-365 AND SER-1020</scope>
    <scope>IDENTIFICATION BY MASS SPECTROMETRY</scope>
    <source>
        <strain evidence="6">BALB/cJ</strain>
    </source>
</reference>
<reference key="2">
    <citation type="journal article" date="2010" name="Cell">
        <title>A tissue-specific atlas of mouse protein phosphorylation and expression.</title>
        <authorList>
            <person name="Huttlin E.L."/>
            <person name="Jedrychowski M.P."/>
            <person name="Elias J.E."/>
            <person name="Goswami T."/>
            <person name="Rad R."/>
            <person name="Beausoleil S.A."/>
            <person name="Villen J."/>
            <person name="Haas W."/>
            <person name="Sowa M.E."/>
            <person name="Gygi S.P."/>
        </authorList>
    </citation>
    <scope>IDENTIFICATION BY MASS SPECTROMETRY [LARGE SCALE ANALYSIS]</scope>
    <source>
        <tissue>Testis</tissue>
    </source>
</reference>
<reference key="3">
    <citation type="journal article" date="2011" name="BMB Rep.">
        <title>FSCB phosphorylation in mouse spermatozoa capacitation.</title>
        <authorList>
            <person name="Liu S.L."/>
            <person name="Ni B."/>
            <person name="Wang X.W."/>
            <person name="Huo W.Q."/>
            <person name="Zhang J."/>
            <person name="Tian Z.Q."/>
            <person name="Huang Z.M."/>
            <person name="Tian Y."/>
            <person name="Tang J."/>
            <person name="Zheng Y.H."/>
            <person name="Jin F.S."/>
            <person name="Li Y.F."/>
        </authorList>
    </citation>
    <scope>PHOSPHORYLATION BY PKA</scope>
</reference>
<reference key="4">
    <citation type="journal article" date="2016" name="Am. J. Transl. Res.">
        <title>FSCB phosphorylation regulates mouse spermatozoa capacitation through suppressing SUMOylation of ROPN1/ROPN1L.</title>
        <authorList>
            <person name="Zhang X."/>
            <person name="Chen M."/>
            <person name="Yu R."/>
            <person name="Liu B."/>
            <person name="Tian Z."/>
            <person name="Liu S."/>
        </authorList>
    </citation>
    <scope>FUNCTION</scope>
    <scope>PHOSPHORYLATION</scope>
    <scope>INTERACTION WITH ROPN1 AND ROPN1L</scope>
    <scope>TISSUE SPECIFICITY</scope>
</reference>
<feature type="chain" id="PRO_0000331225" description="Fibrous sheath CABYR-binding protein">
    <location>
        <begin position="1"/>
        <end position="1074"/>
    </location>
</feature>
<feature type="region of interest" description="Disordered" evidence="1">
    <location>
        <begin position="1"/>
        <end position="73"/>
    </location>
</feature>
<feature type="region of interest" description="Disordered" evidence="1">
    <location>
        <begin position="272"/>
        <end position="294"/>
    </location>
</feature>
<feature type="region of interest" description="Disordered" evidence="1">
    <location>
        <begin position="317"/>
        <end position="343"/>
    </location>
</feature>
<feature type="region of interest" description="Disordered" evidence="1">
    <location>
        <begin position="437"/>
        <end position="789"/>
    </location>
</feature>
<feature type="region of interest" description="Disordered" evidence="1">
    <location>
        <begin position="818"/>
        <end position="982"/>
    </location>
</feature>
<feature type="region of interest" description="Disordered" evidence="1">
    <location>
        <begin position="1026"/>
        <end position="1054"/>
    </location>
</feature>
<feature type="compositionally biased region" description="Low complexity" evidence="1">
    <location>
        <begin position="274"/>
        <end position="290"/>
    </location>
</feature>
<feature type="compositionally biased region" description="Low complexity" evidence="1">
    <location>
        <begin position="448"/>
        <end position="467"/>
    </location>
</feature>
<feature type="compositionally biased region" description="Pro residues" evidence="1">
    <location>
        <begin position="528"/>
        <end position="544"/>
    </location>
</feature>
<feature type="compositionally biased region" description="Low complexity" evidence="1">
    <location>
        <begin position="558"/>
        <end position="575"/>
    </location>
</feature>
<feature type="compositionally biased region" description="Pro residues" evidence="1">
    <location>
        <begin position="576"/>
        <end position="592"/>
    </location>
</feature>
<feature type="compositionally biased region" description="Pro residues" evidence="1">
    <location>
        <begin position="673"/>
        <end position="688"/>
    </location>
</feature>
<feature type="compositionally biased region" description="Low complexity" evidence="1">
    <location>
        <begin position="689"/>
        <end position="720"/>
    </location>
</feature>
<feature type="modified residue" description="Phosphoserine" evidence="2">
    <location>
        <position position="25"/>
    </location>
</feature>
<feature type="modified residue" description="Phosphoserine" evidence="2">
    <location>
        <position position="57"/>
    </location>
</feature>
<feature type="modified residue" description="Phosphoserine" evidence="2">
    <location>
        <position position="186"/>
    </location>
</feature>
<feature type="modified residue" description="Phosphoserine" evidence="2">
    <location>
        <position position="275"/>
    </location>
</feature>
<feature type="modified residue" description="Phosphoserine" evidence="2">
    <location>
        <position position="365"/>
    </location>
</feature>
<feature type="modified residue" description="Phosphoserine" evidence="2">
    <location>
        <position position="1020"/>
    </location>
</feature>
<protein>
    <recommendedName>
        <fullName>Fibrous sheath CABYR-binding protein</fullName>
    </recommendedName>
    <alternativeName>
        <fullName>PKA-phosphorylated calcium and CABYR-binding protein</fullName>
    </alternativeName>
</protein>
<dbReference type="EMBL" id="EF133693">
    <property type="protein sequence ID" value="ABL63912.1"/>
    <property type="molecule type" value="mRNA"/>
</dbReference>
<dbReference type="FunCoup" id="A1EGX6">
    <property type="interactions" value="1"/>
</dbReference>
<dbReference type="STRING" id="10090.ENSMUSP00000051554"/>
<dbReference type="GlyGen" id="A1EGX6">
    <property type="glycosylation" value="1 site"/>
</dbReference>
<dbReference type="iPTMnet" id="A1EGX6"/>
<dbReference type="PhosphoSitePlus" id="A1EGX6"/>
<dbReference type="SwissPalm" id="A1EGX6"/>
<dbReference type="PaxDb" id="10090-ENSMUSP00000051554"/>
<dbReference type="ProteomicsDB" id="271608"/>
<dbReference type="AGR" id="MGI:3646964"/>
<dbReference type="MGI" id="MGI:3646964">
    <property type="gene designation" value="Fscb"/>
</dbReference>
<dbReference type="eggNOG" id="ENOG502S90R">
    <property type="taxonomic scope" value="Eukaryota"/>
</dbReference>
<dbReference type="InParanoid" id="A1EGX6"/>
<dbReference type="OrthoDB" id="9838448at2759"/>
<dbReference type="ChiTaRS" id="Fscb">
    <property type="organism name" value="mouse"/>
</dbReference>
<dbReference type="PRO" id="PR:A1EGX6"/>
<dbReference type="Proteomes" id="UP000000589">
    <property type="component" value="Unplaced"/>
</dbReference>
<dbReference type="RNAct" id="A1EGX6">
    <property type="molecule type" value="protein"/>
</dbReference>
<dbReference type="GO" id="GO:0035686">
    <property type="term" value="C:sperm fibrous sheath"/>
    <property type="evidence" value="ECO:0000314"/>
    <property type="project" value="MGI"/>
</dbReference>
<dbReference type="GO" id="GO:0097228">
    <property type="term" value="C:sperm principal piece"/>
    <property type="evidence" value="ECO:0000314"/>
    <property type="project" value="MGI"/>
</dbReference>
<dbReference type="GO" id="GO:0005509">
    <property type="term" value="F:calcium ion binding"/>
    <property type="evidence" value="ECO:0000314"/>
    <property type="project" value="MGI"/>
</dbReference>
<dbReference type="GO" id="GO:0033234">
    <property type="term" value="P:negative regulation of protein sumoylation"/>
    <property type="evidence" value="ECO:0000314"/>
    <property type="project" value="UniProtKB"/>
</dbReference>
<dbReference type="InterPro" id="IPR043375">
    <property type="entry name" value="FSCB"/>
</dbReference>
<dbReference type="PANTHER" id="PTHR36135">
    <property type="entry name" value="FIBROUS SHEATH CABYR-BINDING PROTEIN"/>
    <property type="match status" value="1"/>
</dbReference>
<dbReference type="PANTHER" id="PTHR36135:SF1">
    <property type="entry name" value="FIBROUS SHEATH CABYR-BINDING PROTEIN"/>
    <property type="match status" value="1"/>
</dbReference>
<gene>
    <name evidence="7" type="primary">Fscb</name>
</gene>
<name>FSCB_MOUSE</name>
<keyword id="KW-0106">Calcium</keyword>
<keyword id="KW-0966">Cell projection</keyword>
<keyword id="KW-0969">Cilium</keyword>
<keyword id="KW-0903">Direct protein sequencing</keyword>
<keyword id="KW-0282">Flagellum</keyword>
<keyword id="KW-0597">Phosphoprotein</keyword>
<keyword id="KW-1185">Reference proteome</keyword>
<comment type="function">
    <text evidence="2 4">May be involved in the later stages of fibrous sheath biogenesis and spermatozoa capacitation. Inhibits ROPN1 and ROPN1L SUMOylation. Binds calcium.</text>
</comment>
<comment type="subunit">
    <text evidence="2 4">Interacts with CABYR (PubMed:17855365). Interacts with ROPN1 and ROPN1L; the interaction increases upon spermatozoa capacitation conditions (PubMed:27398160).</text>
</comment>
<comment type="subcellular location">
    <subcellularLocation>
        <location evidence="2">Cell projection</location>
        <location evidence="2">Cilium</location>
        <location evidence="2">Flagellum</location>
    </subcellularLocation>
    <text evidence="2">Localizes to cortex of the fibrous sheath including the surface of the longitudinal columns and ribs of the principal piece of sperm flagella.</text>
</comment>
<comment type="tissue specificity">
    <text evidence="2 4">Expression is restricted to testis and epididymis, expressed by spermatozoa.</text>
</comment>
<comment type="developmental stage">
    <text evidence="2">First expressed at step 11 of spermatogenesis in the elongating spermatids, and subsequently incorporates into the flagellar principal piece of the sperm.</text>
</comment>
<comment type="PTM">
    <text evidence="2 3 4">Phosphorylated by PKA upon spermatozoa capacitation conditions.</text>
</comment>
<evidence type="ECO:0000256" key="1">
    <source>
        <dbReference type="SAM" id="MobiDB-lite"/>
    </source>
</evidence>
<evidence type="ECO:0000269" key="2">
    <source>
    </source>
</evidence>
<evidence type="ECO:0000269" key="3">
    <source>
    </source>
</evidence>
<evidence type="ECO:0000269" key="4">
    <source>
    </source>
</evidence>
<evidence type="ECO:0000305" key="5"/>
<evidence type="ECO:0000312" key="6">
    <source>
        <dbReference type="EMBL" id="ABL63912.1"/>
    </source>
</evidence>
<evidence type="ECO:0000312" key="7">
    <source>
        <dbReference type="MGI" id="MGI:3646964"/>
    </source>
</evidence>
<organism>
    <name type="scientific">Mus musculus</name>
    <name type="common">Mouse</name>
    <dbReference type="NCBI Taxonomy" id="10090"/>
    <lineage>
        <taxon>Eukaryota</taxon>
        <taxon>Metazoa</taxon>
        <taxon>Chordata</taxon>
        <taxon>Craniata</taxon>
        <taxon>Vertebrata</taxon>
        <taxon>Euteleostomi</taxon>
        <taxon>Mammalia</taxon>
        <taxon>Eutheria</taxon>
        <taxon>Euarchontoglires</taxon>
        <taxon>Glires</taxon>
        <taxon>Rodentia</taxon>
        <taxon>Myomorpha</taxon>
        <taxon>Muroidea</taxon>
        <taxon>Muridae</taxon>
        <taxon>Murinae</taxon>
        <taxon>Mus</taxon>
        <taxon>Mus</taxon>
    </lineage>
</organism>
<sequence length="1074" mass="114979">MEECEEPEEPISLGRQEYRRRRRPSQPMVDKSQQTEITEKRKAMASVQPPAPKATHSIGNIPGSKDNYSRKEYESLRLSSQLQKTLMKRKHVQDMTDKSLQTEPIVEEKVEVIFIDKTLKLEENTAGVGEIAPELPQSIPEVEIPTSRPTSHLIDRSQQTSCTGDWSLIYICPKEKVDKEQQTYFSELEIIIRSIPGSSMTKSKEETIPIAQEDPLVEINGSLEIEVLSPEELPDVMMSFTEGEISGELQALSNGEATVKGELFLTEEIPIQAPSPAEETSAAETATTTAKDVVDIQAPPADKLSSVEAPADISPTLVQGALSDKPSDQQYPQGTEMAPSELPVEDLDPFSEEVLEKVQALTTDSMLEDLGIAESTIAEETSGKVQHPLSEETSKEVPAEVHFPIAADFEESAILINEKFATDEVFEEYKPPIIEEVSADKATAEVQPPSAEDASEEVASSEVLPPSTEQGTVEDLTAEVLSTPTEEGPTEVPPQPTEEGPAEVPPPLSEEGPAEVPPAPAEEAPAEVLPPPAEEAPAEVPPPLTEEGPAEVPPPLTEEGPAEVPLAPAEEVPAEFLPPPAEEVPAEVPPPLTEEGPAEVPPPLTEEGPEEVPPLPAEEAPTKVPPSPAEKGSAEVSPPQTEEGPAEVPPPPAEEFPTEVPSSSAEEGSSEVPLPPTAERPEEAPPPATEEAPVEVLPPATEEAPVEVLPPATEEAPVEVQSPAAEEGLAEVPPPPTEESPTHDVPTEVQVPQAKESPGQVLPLSGESTAEEASAQVQPPSFEKAPLESLPLEEVEKIHLDNLPFEVQPLPTEDIAIGVPAESQALPADENPAREDTVETQPSSFEGAPIAENPIEAPLPASEADTGREDSAVHPSSLGPTDEAPAEIQILQTDDIPTEMSPVENQPLPAEEGFPEVVSEEEATAAEVRFPLSEGAPAQEATVEAQLTSVEESPKRASVDVQPLSPETPVEESPGVDLPLKTNEVTMQEFRVEKMPAEDSLPPSEQTPADQVLLKEHRLSQVADISEKELESTTLTSDKMSEGIDSVPEDVSGTKDDQISTFKIEGTIKIELKN</sequence>